<sequence length="462" mass="50532">MEYRIERDTMGEVKVPADKFWGAQTQRSKENFKIGSEKMPMRVVKAFAILKRSTALANKRLGNLDAEKAEAIAAVCDDVLKGKYDDNFPLVVWQTGSGTQSNMNMNEVVANRATALLKEKNSDQTIHPNDDVNRSQSSNDTFPTAMHVAAVLAVYEQLVPALDQLRNTLDEKAKAYNDIVKIGRTHLQDATPLTLGQEISGWVHMLDRSKEMILEATDKMRALAIGGTAVGTGINAHPEFGELVSEEITKLTGQTFSSSPNKFHALTSHDEITYAHGALKALAADLMKIANDVRWLASGPRCGIGEIVIPENEPGSSIMPGKVNPTQSEALTMIAAQIMGNDATIGFAASQGNFELNVFKPVIIYNFLQSVQLLSDGMNSFHDKCAVGIEPNKETIQENLSNSLMLVTALNPHIGYENAAKIAKLAHKEGLTLKEAALKLELLTEEQFNEMVKPEDMVKPKA</sequence>
<reference key="1">
    <citation type="journal article" date="1985" name="Nucleic Acids Res.">
        <title>Complete nucleotide sequence of the fumarase gene (citG) of Bacillus subtilis 168.</title>
        <authorList>
            <person name="Miles J.S."/>
            <person name="Guest J.R."/>
        </authorList>
    </citation>
    <scope>NUCLEOTIDE SEQUENCE [GENOMIC DNA]</scope>
    <source>
        <strain>168</strain>
    </source>
</reference>
<reference key="2">
    <citation type="journal article" date="1998" name="Microbiology">
        <title>The yvsA-yvqA (293 degrees - 289 degrees) region of the Bacillus subtilis chromosome containing genes involved in metal ion uptake and a putative sigma factor.</title>
        <authorList>
            <person name="Wipat A."/>
            <person name="Brignell C.S."/>
            <person name="Guy J.B."/>
            <person name="Rose M."/>
            <person name="Emmerson P.T."/>
            <person name="Harwood C.R."/>
        </authorList>
    </citation>
    <scope>NUCLEOTIDE SEQUENCE [GENOMIC DNA]</scope>
    <source>
        <strain>168</strain>
    </source>
</reference>
<reference key="3">
    <citation type="journal article" date="1997" name="Nature">
        <title>The complete genome sequence of the Gram-positive bacterium Bacillus subtilis.</title>
        <authorList>
            <person name="Kunst F."/>
            <person name="Ogasawara N."/>
            <person name="Moszer I."/>
            <person name="Albertini A.M."/>
            <person name="Alloni G."/>
            <person name="Azevedo V."/>
            <person name="Bertero M.G."/>
            <person name="Bessieres P."/>
            <person name="Bolotin A."/>
            <person name="Borchert S."/>
            <person name="Borriss R."/>
            <person name="Boursier L."/>
            <person name="Brans A."/>
            <person name="Braun M."/>
            <person name="Brignell S.C."/>
            <person name="Bron S."/>
            <person name="Brouillet S."/>
            <person name="Bruschi C.V."/>
            <person name="Caldwell B."/>
            <person name="Capuano V."/>
            <person name="Carter N.M."/>
            <person name="Choi S.-K."/>
            <person name="Codani J.-J."/>
            <person name="Connerton I.F."/>
            <person name="Cummings N.J."/>
            <person name="Daniel R.A."/>
            <person name="Denizot F."/>
            <person name="Devine K.M."/>
            <person name="Duesterhoeft A."/>
            <person name="Ehrlich S.D."/>
            <person name="Emmerson P.T."/>
            <person name="Entian K.-D."/>
            <person name="Errington J."/>
            <person name="Fabret C."/>
            <person name="Ferrari E."/>
            <person name="Foulger D."/>
            <person name="Fritz C."/>
            <person name="Fujita M."/>
            <person name="Fujita Y."/>
            <person name="Fuma S."/>
            <person name="Galizzi A."/>
            <person name="Galleron N."/>
            <person name="Ghim S.-Y."/>
            <person name="Glaser P."/>
            <person name="Goffeau A."/>
            <person name="Golightly E.J."/>
            <person name="Grandi G."/>
            <person name="Guiseppi G."/>
            <person name="Guy B.J."/>
            <person name="Haga K."/>
            <person name="Haiech J."/>
            <person name="Harwood C.R."/>
            <person name="Henaut A."/>
            <person name="Hilbert H."/>
            <person name="Holsappel S."/>
            <person name="Hosono S."/>
            <person name="Hullo M.-F."/>
            <person name="Itaya M."/>
            <person name="Jones L.-M."/>
            <person name="Joris B."/>
            <person name="Karamata D."/>
            <person name="Kasahara Y."/>
            <person name="Klaerr-Blanchard M."/>
            <person name="Klein C."/>
            <person name="Kobayashi Y."/>
            <person name="Koetter P."/>
            <person name="Koningstein G."/>
            <person name="Krogh S."/>
            <person name="Kumano M."/>
            <person name="Kurita K."/>
            <person name="Lapidus A."/>
            <person name="Lardinois S."/>
            <person name="Lauber J."/>
            <person name="Lazarevic V."/>
            <person name="Lee S.-M."/>
            <person name="Levine A."/>
            <person name="Liu H."/>
            <person name="Masuda S."/>
            <person name="Mauel C."/>
            <person name="Medigue C."/>
            <person name="Medina N."/>
            <person name="Mellado R.P."/>
            <person name="Mizuno M."/>
            <person name="Moestl D."/>
            <person name="Nakai S."/>
            <person name="Noback M."/>
            <person name="Noone D."/>
            <person name="O'Reilly M."/>
            <person name="Ogawa K."/>
            <person name="Ogiwara A."/>
            <person name="Oudega B."/>
            <person name="Park S.-H."/>
            <person name="Parro V."/>
            <person name="Pohl T.M."/>
            <person name="Portetelle D."/>
            <person name="Porwollik S."/>
            <person name="Prescott A.M."/>
            <person name="Presecan E."/>
            <person name="Pujic P."/>
            <person name="Purnelle B."/>
            <person name="Rapoport G."/>
            <person name="Rey M."/>
            <person name="Reynolds S."/>
            <person name="Rieger M."/>
            <person name="Rivolta C."/>
            <person name="Rocha E."/>
            <person name="Roche B."/>
            <person name="Rose M."/>
            <person name="Sadaie Y."/>
            <person name="Sato T."/>
            <person name="Scanlan E."/>
            <person name="Schleich S."/>
            <person name="Schroeter R."/>
            <person name="Scoffone F."/>
            <person name="Sekiguchi J."/>
            <person name="Sekowska A."/>
            <person name="Seror S.J."/>
            <person name="Serror P."/>
            <person name="Shin B.-S."/>
            <person name="Soldo B."/>
            <person name="Sorokin A."/>
            <person name="Tacconi E."/>
            <person name="Takagi T."/>
            <person name="Takahashi H."/>
            <person name="Takemaru K."/>
            <person name="Takeuchi M."/>
            <person name="Tamakoshi A."/>
            <person name="Tanaka T."/>
            <person name="Terpstra P."/>
            <person name="Tognoni A."/>
            <person name="Tosato V."/>
            <person name="Uchiyama S."/>
            <person name="Vandenbol M."/>
            <person name="Vannier F."/>
            <person name="Vassarotti A."/>
            <person name="Viari A."/>
            <person name="Wambutt R."/>
            <person name="Wedler E."/>
            <person name="Wedler H."/>
            <person name="Weitzenegger T."/>
            <person name="Winters P."/>
            <person name="Wipat A."/>
            <person name="Yamamoto H."/>
            <person name="Yamane K."/>
            <person name="Yasumoto K."/>
            <person name="Yata K."/>
            <person name="Yoshida K."/>
            <person name="Yoshikawa H.-F."/>
            <person name="Zumstein E."/>
            <person name="Yoshikawa H."/>
            <person name="Danchin A."/>
        </authorList>
    </citation>
    <scope>NUCLEOTIDE SEQUENCE [LARGE SCALE GENOMIC DNA]</scope>
    <source>
        <strain>168</strain>
    </source>
</reference>
<reference key="4">
    <citation type="journal article" date="1985" name="Gene">
        <title>The nucleotide sequence of a spore germination gene (gerA) of Bacillus subtilis 168.</title>
        <authorList>
            <person name="Feavers I.M."/>
            <person name="Miles J.S."/>
            <person name="Moir A."/>
        </authorList>
    </citation>
    <scope>NUCLEOTIDE SEQUENCE [GENOMIC DNA] OF 1-50</scope>
    <source>
        <strain>168</strain>
    </source>
</reference>
<reference key="5">
    <citation type="journal article" date="1989" name="J. Bacteriol.">
        <title>Role of sigma H in expression of the fumarase gene (citG) in vegetative cells of Bacillus subtilis 168.</title>
        <authorList>
            <person name="Price V.A."/>
            <person name="Feavers I.M."/>
            <person name="Moir A."/>
        </authorList>
    </citation>
    <scope>NUCLEOTIDE SEQUENCE [GENOMIC DNA] OF 1-50</scope>
    <source>
        <strain>168</strain>
    </source>
</reference>
<reference key="6">
    <citation type="journal article" date="1997" name="Microbiology">
        <title>Sequencing of regions downstream of addA (98 degrees) and citG (289 degrees) in Bacillus subtilis.</title>
        <authorList>
            <person name="Medina N."/>
            <person name="Vannier F."/>
            <person name="Roche B."/>
            <person name="Autret S."/>
            <person name="Levine A."/>
            <person name="Seror S.J."/>
        </authorList>
    </citation>
    <scope>NUCLEOTIDE SEQUENCE [GENOMIC DNA] OF 224-462</scope>
</reference>
<protein>
    <recommendedName>
        <fullName evidence="1">Fumarate hydratase class II</fullName>
        <shortName evidence="1">Fumarase C</shortName>
        <ecNumber evidence="1">4.2.1.2</ecNumber>
    </recommendedName>
    <alternativeName>
        <fullName evidence="1">Aerobic fumarase</fullName>
    </alternativeName>
    <alternativeName>
        <fullName evidence="1">Iron-independent fumarase</fullName>
    </alternativeName>
</protein>
<gene>
    <name evidence="1" type="primary">fumC</name>
    <name type="synonym">citG</name>
    <name type="ordered locus">BSU33040</name>
</gene>
<feature type="chain" id="PRO_0000161255" description="Fumarate hydratase class II">
    <location>
        <begin position="1"/>
        <end position="462"/>
    </location>
</feature>
<feature type="active site" description="Proton donor/acceptor" evidence="1">
    <location>
        <position position="186"/>
    </location>
</feature>
<feature type="active site" evidence="1">
    <location>
        <position position="316"/>
    </location>
</feature>
<feature type="binding site" evidence="1">
    <location>
        <begin position="97"/>
        <end position="99"/>
    </location>
    <ligand>
        <name>substrate</name>
    </ligand>
</feature>
<feature type="binding site" description="in site B" evidence="1">
    <location>
        <begin position="127"/>
        <end position="130"/>
    </location>
    <ligand>
        <name>substrate</name>
    </ligand>
</feature>
<feature type="binding site" evidence="1">
    <location>
        <begin position="137"/>
        <end position="139"/>
    </location>
    <ligand>
        <name>substrate</name>
    </ligand>
</feature>
<feature type="binding site" evidence="1">
    <location>
        <position position="185"/>
    </location>
    <ligand>
        <name>substrate</name>
    </ligand>
</feature>
<feature type="binding site" evidence="1">
    <location>
        <position position="317"/>
    </location>
    <ligand>
        <name>substrate</name>
    </ligand>
</feature>
<feature type="binding site" evidence="1">
    <location>
        <begin position="322"/>
        <end position="324"/>
    </location>
    <ligand>
        <name>substrate</name>
    </ligand>
</feature>
<feature type="site" description="Important for catalytic activity" evidence="1">
    <location>
        <position position="329"/>
    </location>
</feature>
<feature type="sequence conflict" description="In Ref. 1; CAA25849." evidence="2" ref="1">
    <original>A</original>
    <variation>V</variation>
    <location>
        <position position="66"/>
    </location>
</feature>
<keyword id="KW-0963">Cytoplasm</keyword>
<keyword id="KW-0456">Lyase</keyword>
<keyword id="KW-1185">Reference proteome</keyword>
<keyword id="KW-0816">Tricarboxylic acid cycle</keyword>
<accession>P07343</accession>
<accession>O32194</accession>
<name>FUMC_BACSU</name>
<organism>
    <name type="scientific">Bacillus subtilis (strain 168)</name>
    <dbReference type="NCBI Taxonomy" id="224308"/>
    <lineage>
        <taxon>Bacteria</taxon>
        <taxon>Bacillati</taxon>
        <taxon>Bacillota</taxon>
        <taxon>Bacilli</taxon>
        <taxon>Bacillales</taxon>
        <taxon>Bacillaceae</taxon>
        <taxon>Bacillus</taxon>
    </lineage>
</organism>
<proteinExistence type="inferred from homology"/>
<evidence type="ECO:0000255" key="1">
    <source>
        <dbReference type="HAMAP-Rule" id="MF_00743"/>
    </source>
</evidence>
<evidence type="ECO:0000305" key="2"/>
<dbReference type="EC" id="4.2.1.2" evidence="1"/>
<dbReference type="EMBL" id="X01701">
    <property type="protein sequence ID" value="CAA25849.1"/>
    <property type="molecule type" value="Genomic_DNA"/>
</dbReference>
<dbReference type="EMBL" id="AJ223978">
    <property type="protein sequence ID" value="CAA11749.1"/>
    <property type="molecule type" value="Genomic_DNA"/>
</dbReference>
<dbReference type="EMBL" id="AL009126">
    <property type="protein sequence ID" value="CAB15294.1"/>
    <property type="molecule type" value="Genomic_DNA"/>
</dbReference>
<dbReference type="EMBL" id="M11918">
    <property type="protein sequence ID" value="AAA22464.1"/>
    <property type="molecule type" value="Genomic_DNA"/>
</dbReference>
<dbReference type="EMBL" id="Z93941">
    <property type="protein sequence ID" value="CAB07973.1"/>
    <property type="molecule type" value="Genomic_DNA"/>
</dbReference>
<dbReference type="PIR" id="A23033">
    <property type="entry name" value="UFBSC8"/>
</dbReference>
<dbReference type="RefSeq" id="NP_391184.1">
    <property type="nucleotide sequence ID" value="NC_000964.3"/>
</dbReference>
<dbReference type="RefSeq" id="WP_003228523.1">
    <property type="nucleotide sequence ID" value="NZ_OZ025638.1"/>
</dbReference>
<dbReference type="SMR" id="P07343"/>
<dbReference type="FunCoup" id="P07343">
    <property type="interactions" value="561"/>
</dbReference>
<dbReference type="IntAct" id="P07343">
    <property type="interactions" value="2"/>
</dbReference>
<dbReference type="MINT" id="P07343"/>
<dbReference type="STRING" id="224308.BSU33040"/>
<dbReference type="jPOST" id="P07343"/>
<dbReference type="PaxDb" id="224308-BSU33040"/>
<dbReference type="EnsemblBacteria" id="CAB15294">
    <property type="protein sequence ID" value="CAB15294"/>
    <property type="gene ID" value="BSU_33040"/>
</dbReference>
<dbReference type="GeneID" id="938591"/>
<dbReference type="KEGG" id="bsu:BSU33040"/>
<dbReference type="PATRIC" id="fig|224308.179.peg.3581"/>
<dbReference type="eggNOG" id="COG0114">
    <property type="taxonomic scope" value="Bacteria"/>
</dbReference>
<dbReference type="InParanoid" id="P07343"/>
<dbReference type="OrthoDB" id="9802809at2"/>
<dbReference type="PhylomeDB" id="P07343"/>
<dbReference type="BioCyc" id="BSUB:BSU33040-MONOMER"/>
<dbReference type="UniPathway" id="UPA00223">
    <property type="reaction ID" value="UER01007"/>
</dbReference>
<dbReference type="Proteomes" id="UP000001570">
    <property type="component" value="Chromosome"/>
</dbReference>
<dbReference type="GO" id="GO:0005737">
    <property type="term" value="C:cytoplasm"/>
    <property type="evidence" value="ECO:0007669"/>
    <property type="project" value="UniProtKB-SubCell"/>
</dbReference>
<dbReference type="GO" id="GO:0004333">
    <property type="term" value="F:fumarate hydratase activity"/>
    <property type="evidence" value="ECO:0000318"/>
    <property type="project" value="GO_Central"/>
</dbReference>
<dbReference type="GO" id="GO:0006106">
    <property type="term" value="P:fumarate metabolic process"/>
    <property type="evidence" value="ECO:0000318"/>
    <property type="project" value="GO_Central"/>
</dbReference>
<dbReference type="GO" id="GO:0006108">
    <property type="term" value="P:malate metabolic process"/>
    <property type="evidence" value="ECO:0000318"/>
    <property type="project" value="GO_Central"/>
</dbReference>
<dbReference type="GO" id="GO:0006099">
    <property type="term" value="P:tricarboxylic acid cycle"/>
    <property type="evidence" value="ECO:0000318"/>
    <property type="project" value="GO_Central"/>
</dbReference>
<dbReference type="CDD" id="cd01362">
    <property type="entry name" value="Fumarase_classII"/>
    <property type="match status" value="1"/>
</dbReference>
<dbReference type="FunFam" id="1.10.40.30:FF:000002">
    <property type="entry name" value="Fumarate hydratase class II"/>
    <property type="match status" value="1"/>
</dbReference>
<dbReference type="FunFam" id="1.10.275.10:FF:000001">
    <property type="entry name" value="Fumarate hydratase, mitochondrial"/>
    <property type="match status" value="1"/>
</dbReference>
<dbReference type="FunFam" id="1.20.200.10:FF:000001">
    <property type="entry name" value="Fumarate hydratase, mitochondrial"/>
    <property type="match status" value="1"/>
</dbReference>
<dbReference type="Gene3D" id="1.10.40.30">
    <property type="entry name" value="Fumarase/aspartase (C-terminal domain)"/>
    <property type="match status" value="1"/>
</dbReference>
<dbReference type="Gene3D" id="1.20.200.10">
    <property type="entry name" value="Fumarase/aspartase (Central domain)"/>
    <property type="match status" value="1"/>
</dbReference>
<dbReference type="Gene3D" id="1.10.275.10">
    <property type="entry name" value="Fumarase/aspartase (N-terminal domain)"/>
    <property type="match status" value="1"/>
</dbReference>
<dbReference type="HAMAP" id="MF_00743">
    <property type="entry name" value="FumaraseC"/>
    <property type="match status" value="1"/>
</dbReference>
<dbReference type="InterPro" id="IPR005677">
    <property type="entry name" value="Fum_hydII"/>
</dbReference>
<dbReference type="InterPro" id="IPR024083">
    <property type="entry name" value="Fumarase/histidase_N"/>
</dbReference>
<dbReference type="InterPro" id="IPR018951">
    <property type="entry name" value="Fumarase_C_C"/>
</dbReference>
<dbReference type="InterPro" id="IPR020557">
    <property type="entry name" value="Fumarate_lyase_CS"/>
</dbReference>
<dbReference type="InterPro" id="IPR000362">
    <property type="entry name" value="Fumarate_lyase_fam"/>
</dbReference>
<dbReference type="InterPro" id="IPR022761">
    <property type="entry name" value="Fumarate_lyase_N"/>
</dbReference>
<dbReference type="InterPro" id="IPR008948">
    <property type="entry name" value="L-Aspartase-like"/>
</dbReference>
<dbReference type="NCBIfam" id="TIGR00979">
    <property type="entry name" value="fumC_II"/>
    <property type="match status" value="1"/>
</dbReference>
<dbReference type="NCBIfam" id="NF008909">
    <property type="entry name" value="PRK12273.1"/>
    <property type="match status" value="1"/>
</dbReference>
<dbReference type="PANTHER" id="PTHR11444">
    <property type="entry name" value="ASPARTATEAMMONIA/ARGININOSUCCINATE/ADENYLOSUCCINATE LYASE"/>
    <property type="match status" value="1"/>
</dbReference>
<dbReference type="PANTHER" id="PTHR11444:SF1">
    <property type="entry name" value="FUMARATE HYDRATASE, MITOCHONDRIAL"/>
    <property type="match status" value="1"/>
</dbReference>
<dbReference type="Pfam" id="PF10415">
    <property type="entry name" value="FumaraseC_C"/>
    <property type="match status" value="1"/>
</dbReference>
<dbReference type="Pfam" id="PF00206">
    <property type="entry name" value="Lyase_1"/>
    <property type="match status" value="1"/>
</dbReference>
<dbReference type="PRINTS" id="PR00145">
    <property type="entry name" value="ARGSUCLYASE"/>
</dbReference>
<dbReference type="PRINTS" id="PR00149">
    <property type="entry name" value="FUMRATELYASE"/>
</dbReference>
<dbReference type="SUPFAM" id="SSF48557">
    <property type="entry name" value="L-aspartase-like"/>
    <property type="match status" value="1"/>
</dbReference>
<dbReference type="PROSITE" id="PS00163">
    <property type="entry name" value="FUMARATE_LYASES"/>
    <property type="match status" value="1"/>
</dbReference>
<comment type="function">
    <text evidence="1">Involved in the TCA cycle. Catalyzes the stereospecific interconversion of fumarate to L-malate.</text>
</comment>
<comment type="catalytic activity">
    <reaction evidence="1">
        <text>(S)-malate = fumarate + H2O</text>
        <dbReference type="Rhea" id="RHEA:12460"/>
        <dbReference type="ChEBI" id="CHEBI:15377"/>
        <dbReference type="ChEBI" id="CHEBI:15589"/>
        <dbReference type="ChEBI" id="CHEBI:29806"/>
        <dbReference type="EC" id="4.2.1.2"/>
    </reaction>
</comment>
<comment type="pathway">
    <text evidence="1">Carbohydrate metabolism; tricarboxylic acid cycle; (S)-malate from fumarate: step 1/1.</text>
</comment>
<comment type="subunit">
    <text evidence="1">Homotetramer.</text>
</comment>
<comment type="subcellular location">
    <subcellularLocation>
        <location evidence="1">Cytoplasm</location>
    </subcellularLocation>
</comment>
<comment type="miscellaneous">
    <text evidence="1">There are 2 substrate-binding sites: the catalytic A site, and the non-catalytic B site that may play a role in the transfer of substrate or product between the active site and the solvent. Alternatively, the B site may bind allosteric effectors.</text>
</comment>
<comment type="similarity">
    <text evidence="1">Belongs to the class-II fumarase/aspartase family. Fumarase subfamily.</text>
</comment>